<protein>
    <recommendedName>
        <fullName>Geranylgeranyl transferase type-2 subunit beta</fullName>
        <ecNumber evidence="1">2.5.1.60</ecNumber>
    </recommendedName>
    <alternativeName>
        <fullName>Geranylgeranyl transferase type II subunit beta</fullName>
        <shortName>GGTase-II-beta</shortName>
    </alternativeName>
    <alternativeName>
        <fullName>Rab geranyl-geranyltransferase subunit beta</fullName>
        <shortName>Rab GG transferase beta</shortName>
        <shortName>Rab GGTase beta</shortName>
    </alternativeName>
    <alternativeName>
        <fullName>Rab geranylgeranyltransferase subunit beta</fullName>
    </alternativeName>
    <alternativeName>
        <fullName>Type II protein geranyl-geranyltransferase subunit beta</fullName>
    </alternativeName>
</protein>
<sequence length="331" mass="36972">MGTPQKDVIIKSDAPDTLLLEKHADYIASYGSKKDDYEYCMSEYLRMSGIYWGLTVMDLMGQLHRMNREEILTFIKSCQHECGGISASIGHDPHLLYTLSAVQILTLYDSINVIDINKVVEYVQSLQKEDGSFAGDIWGEIDTRFSFCAVATLALLGKLDAINVEKAIEFVLSCMNFDGGFGCRPGSESHAGQIYCCTGFLAITSQLHQVNSDLLGWWLCERQLPSGGLNGRPEKLPDVCYSWWVLASLKIIGRLHWIDREKLRSFILACQDEETGGFADRPGDMVDPFHTLFGIAGLSLLGEEQIKPVSPVFCMPEEVLRRVNVQPELVS</sequence>
<feature type="initiator methionine" description="Removed" evidence="1">
    <location>
        <position position="1"/>
    </location>
</feature>
<feature type="chain" id="PRO_0000244433" description="Geranylgeranyl transferase type-2 subunit beta">
    <location>
        <begin position="2"/>
        <end position="331"/>
    </location>
</feature>
<feature type="repeat" description="PFTB 1">
    <location>
        <begin position="20"/>
        <end position="61"/>
    </location>
</feature>
<feature type="repeat" description="PFTB 2">
    <location>
        <begin position="68"/>
        <end position="109"/>
    </location>
</feature>
<feature type="repeat" description="PFTB 3">
    <location>
        <begin position="116"/>
        <end position="157"/>
    </location>
</feature>
<feature type="repeat" description="PFTB 4">
    <location>
        <begin position="164"/>
        <end position="205"/>
    </location>
</feature>
<feature type="repeat" description="PFTB 5">
    <location>
        <begin position="212"/>
        <end position="253"/>
    </location>
</feature>
<feature type="repeat" description="PFTB 6">
    <location>
        <begin position="260"/>
        <end position="302"/>
    </location>
</feature>
<feature type="binding site" evidence="3">
    <location>
        <begin position="190"/>
        <end position="192"/>
    </location>
    <ligand>
        <name>geranylgeranyl diphosphate</name>
        <dbReference type="ChEBI" id="CHEBI:57533"/>
    </ligand>
</feature>
<feature type="binding site" evidence="3">
    <location>
        <position position="238"/>
    </location>
    <ligand>
        <name>Zn(2+)</name>
        <dbReference type="ChEBI" id="CHEBI:29105"/>
        <note>catalytic</note>
    </ligand>
</feature>
<feature type="binding site" evidence="3">
    <location>
        <position position="240"/>
    </location>
    <ligand>
        <name>Zn(2+)</name>
        <dbReference type="ChEBI" id="CHEBI:29105"/>
        <note>catalytic</note>
    </ligand>
</feature>
<feature type="binding site" evidence="3">
    <location>
        <begin position="241"/>
        <end position="244"/>
    </location>
    <ligand>
        <name>geranylgeranyl diphosphate</name>
        <dbReference type="ChEBI" id="CHEBI:57533"/>
    </ligand>
</feature>
<feature type="binding site" evidence="3">
    <location>
        <position position="290"/>
    </location>
    <ligand>
        <name>Zn(2+)</name>
        <dbReference type="ChEBI" id="CHEBI:29105"/>
        <note>catalytic</note>
    </ligand>
</feature>
<feature type="modified residue" description="N-acetylglycine" evidence="1">
    <location>
        <position position="2"/>
    </location>
</feature>
<feature type="modified residue" description="Phosphothreonine" evidence="1">
    <location>
        <position position="3"/>
    </location>
</feature>
<organism>
    <name type="scientific">Bos taurus</name>
    <name type="common">Bovine</name>
    <dbReference type="NCBI Taxonomy" id="9913"/>
    <lineage>
        <taxon>Eukaryota</taxon>
        <taxon>Metazoa</taxon>
        <taxon>Chordata</taxon>
        <taxon>Craniata</taxon>
        <taxon>Vertebrata</taxon>
        <taxon>Euteleostomi</taxon>
        <taxon>Mammalia</taxon>
        <taxon>Eutheria</taxon>
        <taxon>Laurasiatheria</taxon>
        <taxon>Artiodactyla</taxon>
        <taxon>Ruminantia</taxon>
        <taxon>Pecora</taxon>
        <taxon>Bovidae</taxon>
        <taxon>Bovinae</taxon>
        <taxon>Bos</taxon>
    </lineage>
</organism>
<reference key="1">
    <citation type="journal article" date="2005" name="BMC Genomics">
        <title>Characterization of 954 bovine full-CDS cDNA sequences.</title>
        <authorList>
            <person name="Harhay G.P."/>
            <person name="Sonstegard T.S."/>
            <person name="Keele J.W."/>
            <person name="Heaton M.P."/>
            <person name="Clawson M.L."/>
            <person name="Snelling W.M."/>
            <person name="Wiedmann R.T."/>
            <person name="Van Tassell C.P."/>
            <person name="Smith T.P.L."/>
        </authorList>
    </citation>
    <scope>NUCLEOTIDE SEQUENCE [LARGE SCALE MRNA]</scope>
</reference>
<reference key="2">
    <citation type="submission" date="2007-06" db="EMBL/GenBank/DDBJ databases">
        <authorList>
            <consortium name="NIH - Mammalian Gene Collection (MGC) project"/>
        </authorList>
    </citation>
    <scope>NUCLEOTIDE SEQUENCE [LARGE SCALE MRNA]</scope>
    <source>
        <strain>Hereford</strain>
        <tissue>Fetal medulla</tissue>
    </source>
</reference>
<gene>
    <name type="primary">RABGGTB</name>
</gene>
<name>PGTB2_BOVIN</name>
<evidence type="ECO:0000250" key="1">
    <source>
        <dbReference type="UniProtKB" id="P53611"/>
    </source>
</evidence>
<evidence type="ECO:0000250" key="2">
    <source>
        <dbReference type="UniProtKB" id="P53612"/>
    </source>
</evidence>
<evidence type="ECO:0000250" key="3">
    <source>
        <dbReference type="UniProtKB" id="Q08603"/>
    </source>
</evidence>
<evidence type="ECO:0000305" key="4"/>
<proteinExistence type="evidence at transcript level"/>
<dbReference type="EC" id="2.5.1.60" evidence="1"/>
<dbReference type="EMBL" id="BT021007">
    <property type="protein sequence ID" value="AAX09024.1"/>
    <property type="molecule type" value="mRNA"/>
</dbReference>
<dbReference type="EMBL" id="BC147953">
    <property type="protein sequence ID" value="AAI47954.1"/>
    <property type="molecule type" value="mRNA"/>
</dbReference>
<dbReference type="RefSeq" id="NP_001015646.1">
    <property type="nucleotide sequence ID" value="NM_001015646.1"/>
</dbReference>
<dbReference type="SMR" id="Q5E9B3"/>
<dbReference type="FunCoup" id="Q5E9B3">
    <property type="interactions" value="1920"/>
</dbReference>
<dbReference type="STRING" id="9913.ENSBTAP00000024551"/>
<dbReference type="PaxDb" id="9913-ENSBTAP00000024551"/>
<dbReference type="GeneID" id="533276"/>
<dbReference type="KEGG" id="bta:533276"/>
<dbReference type="CTD" id="5876"/>
<dbReference type="VEuPathDB" id="HostDB:ENSBTAG00000018447"/>
<dbReference type="eggNOG" id="KOG0366">
    <property type="taxonomic scope" value="Eukaryota"/>
</dbReference>
<dbReference type="InParanoid" id="Q5E9B3"/>
<dbReference type="OMA" id="VKRCQCP"/>
<dbReference type="OrthoDB" id="5428259at2759"/>
<dbReference type="Reactome" id="R-BTA-6803205">
    <property type="pathway name" value="TP53 regulates transcription of several additional cell death genes whose specific roles in p53-dependent apoptosis remain uncertain"/>
</dbReference>
<dbReference type="Reactome" id="R-BTA-8873719">
    <property type="pathway name" value="RAB geranylgeranylation"/>
</dbReference>
<dbReference type="Proteomes" id="UP000009136">
    <property type="component" value="Chromosome 3"/>
</dbReference>
<dbReference type="Bgee" id="ENSBTAG00000018447">
    <property type="expression patterns" value="Expressed in rectus femoris and 104 other cell types or tissues"/>
</dbReference>
<dbReference type="GO" id="GO:0005968">
    <property type="term" value="C:Rab-protein geranylgeranyltransferase complex"/>
    <property type="evidence" value="ECO:0000250"/>
    <property type="project" value="UniProtKB"/>
</dbReference>
<dbReference type="GO" id="GO:0004663">
    <property type="term" value="F:Rab geranylgeranyltransferase activity"/>
    <property type="evidence" value="ECO:0000250"/>
    <property type="project" value="UniProtKB"/>
</dbReference>
<dbReference type="GO" id="GO:0031267">
    <property type="term" value="F:small GTPase binding"/>
    <property type="evidence" value="ECO:0000250"/>
    <property type="project" value="UniProtKB"/>
</dbReference>
<dbReference type="GO" id="GO:0008270">
    <property type="term" value="F:zinc ion binding"/>
    <property type="evidence" value="ECO:0000250"/>
    <property type="project" value="UniProtKB"/>
</dbReference>
<dbReference type="GO" id="GO:0006888">
    <property type="term" value="P:endoplasmic reticulum to Golgi vesicle-mediated transport"/>
    <property type="evidence" value="ECO:0000318"/>
    <property type="project" value="GO_Central"/>
</dbReference>
<dbReference type="GO" id="GO:0018344">
    <property type="term" value="P:protein geranylgeranylation"/>
    <property type="evidence" value="ECO:0000250"/>
    <property type="project" value="UniProtKB"/>
</dbReference>
<dbReference type="CDD" id="cd02894">
    <property type="entry name" value="GGTase-II"/>
    <property type="match status" value="1"/>
</dbReference>
<dbReference type="FunFam" id="1.50.10.20:FF:000004">
    <property type="entry name" value="Geranylgeranyl transferase type-2 subunit beta"/>
    <property type="match status" value="1"/>
</dbReference>
<dbReference type="Gene3D" id="1.50.10.20">
    <property type="match status" value="1"/>
</dbReference>
<dbReference type="InterPro" id="IPR045089">
    <property type="entry name" value="PGGT1B-like"/>
</dbReference>
<dbReference type="InterPro" id="IPR001330">
    <property type="entry name" value="Prenyltrans"/>
</dbReference>
<dbReference type="InterPro" id="IPR026873">
    <property type="entry name" value="Ptb1"/>
</dbReference>
<dbReference type="InterPro" id="IPR008930">
    <property type="entry name" value="Terpenoid_cyclase/PrenylTrfase"/>
</dbReference>
<dbReference type="PANTHER" id="PTHR11774">
    <property type="entry name" value="GERANYLGERANYL TRANSFERASE TYPE BETA SUBUNIT"/>
    <property type="match status" value="1"/>
</dbReference>
<dbReference type="PANTHER" id="PTHR11774:SF11">
    <property type="entry name" value="GERANYLGERANYL TRANSFERASE TYPE-2 SUBUNIT BETA"/>
    <property type="match status" value="1"/>
</dbReference>
<dbReference type="Pfam" id="PF00432">
    <property type="entry name" value="Prenyltrans"/>
    <property type="match status" value="1"/>
</dbReference>
<dbReference type="SUPFAM" id="SSF48239">
    <property type="entry name" value="Terpenoid cyclases/Protein prenyltransferases"/>
    <property type="match status" value="1"/>
</dbReference>
<comment type="function">
    <text evidence="1">Catalyzes the transfer of a geranylgeranyl moiety from geranylgeranyl diphosphate to both cysteines of Rab proteins with the C-terminal sequence -XXCC, -XCXC and -CCXX, such as RAB1A, RAB3A, RAB5A and RAB7A.</text>
</comment>
<comment type="catalytic activity">
    <reaction evidence="1">
        <text>geranylgeranyl diphosphate + L-cysteinyl-[protein] = S-geranylgeranyl-L-cysteinyl-[protein] + diphosphate</text>
        <dbReference type="Rhea" id="RHEA:21240"/>
        <dbReference type="Rhea" id="RHEA-COMP:10131"/>
        <dbReference type="Rhea" id="RHEA-COMP:11537"/>
        <dbReference type="ChEBI" id="CHEBI:29950"/>
        <dbReference type="ChEBI" id="CHEBI:33019"/>
        <dbReference type="ChEBI" id="CHEBI:57533"/>
        <dbReference type="ChEBI" id="CHEBI:86021"/>
        <dbReference type="EC" id="2.5.1.60"/>
    </reaction>
</comment>
<comment type="cofactor">
    <cofactor evidence="3">
        <name>Zn(2+)</name>
        <dbReference type="ChEBI" id="CHEBI:29105"/>
    </cofactor>
    <text evidence="3">Binds 1 zinc ion per subunit.</text>
</comment>
<comment type="activity regulation">
    <text evidence="1">The enzymatic reaction requires the aid of a Rab escort protein (also called component A).</text>
</comment>
<comment type="subunit">
    <text evidence="1 2">Heterotrimer composed of RABGGTA, RABGGTB and CHM; within this trimer, RABGGTA and RABGGTB form the catalytic component B, while CHM (component A) mediates peptide substrate binding. The Rab GGTase dimer (RGGT) interacts with CHM (component A) prior to Rab protein binding; the association is stabilized by geranylgeranyl pyrophosphate (GGpp). The CHM:RGGT:Rab complex is destabilized by GGpp. Interaction of RABGGTB with prenylated PTP4A2 precludes its association with RABGGTA and inhibits enzyme activity (By similarity). Interacts with CHODL (By similarity). Interacts with non-phosphorylated form of RAB8A; phosphorylation of RAB8A at 'Thr-72' disrupts this interaction (By similarity).</text>
</comment>
<comment type="similarity">
    <text evidence="4">Belongs to the protein prenyltransferase subunit beta family.</text>
</comment>
<keyword id="KW-0007">Acetylation</keyword>
<keyword id="KW-0479">Metal-binding</keyword>
<keyword id="KW-0597">Phosphoprotein</keyword>
<keyword id="KW-0637">Prenyltransferase</keyword>
<keyword id="KW-1185">Reference proteome</keyword>
<keyword id="KW-0677">Repeat</keyword>
<keyword id="KW-0808">Transferase</keyword>
<keyword id="KW-0862">Zinc</keyword>
<accession>Q5E9B3</accession>
<accession>A6QLG2</accession>